<keyword id="KW-0963">Cytoplasm</keyword>
<keyword id="KW-0489">Methyltransferase</keyword>
<keyword id="KW-1185">Reference proteome</keyword>
<keyword id="KW-0698">rRNA processing</keyword>
<keyword id="KW-0949">S-adenosyl-L-methionine</keyword>
<keyword id="KW-0808">Transferase</keyword>
<protein>
    <recommendedName>
        <fullName evidence="1">Ribosomal RNA large subunit methyltransferase M</fullName>
        <ecNumber evidence="1">2.1.1.186</ecNumber>
    </recommendedName>
    <alternativeName>
        <fullName evidence="1">23S rRNA (cytidine2498-2'-O)-methyltransferase</fullName>
    </alternativeName>
    <alternativeName>
        <fullName evidence="1">23S rRNA 2'-O-ribose methyltransferase RlmM</fullName>
    </alternativeName>
</protein>
<feature type="chain" id="PRO_0000314532" description="Ribosomal RNA large subunit methyltransferase M">
    <location>
        <begin position="1"/>
        <end position="349"/>
    </location>
</feature>
<feature type="active site" description="Proton acceptor" evidence="1">
    <location>
        <position position="300"/>
    </location>
</feature>
<feature type="binding site" evidence="1">
    <location>
        <begin position="216"/>
        <end position="219"/>
    </location>
    <ligand>
        <name>S-adenosyl-L-methionine</name>
        <dbReference type="ChEBI" id="CHEBI:59789"/>
    </ligand>
</feature>
<feature type="binding site" evidence="1">
    <location>
        <position position="235"/>
    </location>
    <ligand>
        <name>S-adenosyl-L-methionine</name>
        <dbReference type="ChEBI" id="CHEBI:59789"/>
    </ligand>
</feature>
<feature type="binding site" evidence="1">
    <location>
        <position position="255"/>
    </location>
    <ligand>
        <name>S-adenosyl-L-methionine</name>
        <dbReference type="ChEBI" id="CHEBI:59789"/>
    </ligand>
</feature>
<feature type="binding site" evidence="1">
    <location>
        <position position="271"/>
    </location>
    <ligand>
        <name>S-adenosyl-L-methionine</name>
        <dbReference type="ChEBI" id="CHEBI:59789"/>
    </ligand>
</feature>
<comment type="function">
    <text evidence="1">Catalyzes the 2'-O-methylation at nucleotide C2498 in 23S rRNA.</text>
</comment>
<comment type="catalytic activity">
    <reaction evidence="1">
        <text>cytidine(2498) in 23S rRNA + S-adenosyl-L-methionine = 2'-O-methylcytidine(2498) in 23S rRNA + S-adenosyl-L-homocysteine + H(+)</text>
        <dbReference type="Rhea" id="RHEA:42788"/>
        <dbReference type="Rhea" id="RHEA-COMP:10244"/>
        <dbReference type="Rhea" id="RHEA-COMP:10245"/>
        <dbReference type="ChEBI" id="CHEBI:15378"/>
        <dbReference type="ChEBI" id="CHEBI:57856"/>
        <dbReference type="ChEBI" id="CHEBI:59789"/>
        <dbReference type="ChEBI" id="CHEBI:74495"/>
        <dbReference type="ChEBI" id="CHEBI:82748"/>
        <dbReference type="EC" id="2.1.1.186"/>
    </reaction>
</comment>
<comment type="subunit">
    <text evidence="1">Monomer.</text>
</comment>
<comment type="subcellular location">
    <subcellularLocation>
        <location evidence="1">Cytoplasm</location>
    </subcellularLocation>
</comment>
<comment type="similarity">
    <text evidence="1">Belongs to the class I-like SAM-binding methyltransferase superfamily. RNA methyltransferase RlmE family. RlmM subfamily.</text>
</comment>
<organism>
    <name type="scientific">Saccharophagus degradans (strain 2-40 / ATCC 43961 / DSM 17024)</name>
    <dbReference type="NCBI Taxonomy" id="203122"/>
    <lineage>
        <taxon>Bacteria</taxon>
        <taxon>Pseudomonadati</taxon>
        <taxon>Pseudomonadota</taxon>
        <taxon>Gammaproteobacteria</taxon>
        <taxon>Cellvibrionales</taxon>
        <taxon>Cellvibrionaceae</taxon>
        <taxon>Saccharophagus</taxon>
    </lineage>
</organism>
<dbReference type="EC" id="2.1.1.186" evidence="1"/>
<dbReference type="EMBL" id="CP000282">
    <property type="protein sequence ID" value="ABD80415.1"/>
    <property type="molecule type" value="Genomic_DNA"/>
</dbReference>
<dbReference type="RefSeq" id="WP_011467635.1">
    <property type="nucleotide sequence ID" value="NC_007912.1"/>
</dbReference>
<dbReference type="SMR" id="Q21LL4"/>
<dbReference type="STRING" id="203122.Sde_1153"/>
<dbReference type="GeneID" id="98612832"/>
<dbReference type="KEGG" id="sde:Sde_1153"/>
<dbReference type="eggNOG" id="COG2933">
    <property type="taxonomic scope" value="Bacteria"/>
</dbReference>
<dbReference type="HOGENOM" id="CLU_043780_0_0_6"/>
<dbReference type="OrthoDB" id="154490at2"/>
<dbReference type="Proteomes" id="UP000001947">
    <property type="component" value="Chromosome"/>
</dbReference>
<dbReference type="GO" id="GO:0005737">
    <property type="term" value="C:cytoplasm"/>
    <property type="evidence" value="ECO:0007669"/>
    <property type="project" value="UniProtKB-SubCell"/>
</dbReference>
<dbReference type="GO" id="GO:0008757">
    <property type="term" value="F:S-adenosylmethionine-dependent methyltransferase activity"/>
    <property type="evidence" value="ECO:0007669"/>
    <property type="project" value="UniProtKB-UniRule"/>
</dbReference>
<dbReference type="GO" id="GO:0032259">
    <property type="term" value="P:methylation"/>
    <property type="evidence" value="ECO:0007669"/>
    <property type="project" value="UniProtKB-KW"/>
</dbReference>
<dbReference type="GO" id="GO:0006364">
    <property type="term" value="P:rRNA processing"/>
    <property type="evidence" value="ECO:0007669"/>
    <property type="project" value="UniProtKB-UniRule"/>
</dbReference>
<dbReference type="Gene3D" id="3.30.2300.20">
    <property type="match status" value="1"/>
</dbReference>
<dbReference type="Gene3D" id="3.30.70.2810">
    <property type="match status" value="1"/>
</dbReference>
<dbReference type="Gene3D" id="3.40.50.150">
    <property type="entry name" value="Vaccinia Virus protein VP39"/>
    <property type="match status" value="1"/>
</dbReference>
<dbReference type="HAMAP" id="MF_01551">
    <property type="entry name" value="23SrRNA_methyltr_M"/>
    <property type="match status" value="1"/>
</dbReference>
<dbReference type="InterPro" id="IPR040739">
    <property type="entry name" value="RlmM_FDX"/>
</dbReference>
<dbReference type="InterPro" id="IPR002877">
    <property type="entry name" value="RNA_MeTrfase_FtsJ_dom"/>
</dbReference>
<dbReference type="InterPro" id="IPR011224">
    <property type="entry name" value="rRNA_MeTrfase_M"/>
</dbReference>
<dbReference type="InterPro" id="IPR029063">
    <property type="entry name" value="SAM-dependent_MTases_sf"/>
</dbReference>
<dbReference type="NCBIfam" id="NF008734">
    <property type="entry name" value="PRK11760.1"/>
    <property type="match status" value="1"/>
</dbReference>
<dbReference type="PANTHER" id="PTHR37524">
    <property type="entry name" value="RIBOSOMAL RNA LARGE SUBUNIT METHYLTRANSFERASE M"/>
    <property type="match status" value="1"/>
</dbReference>
<dbReference type="PANTHER" id="PTHR37524:SF2">
    <property type="entry name" value="RIBOSOMAL RNA METHYLTRANSFERASE FTSJ DOMAIN-CONTAINING PROTEIN"/>
    <property type="match status" value="1"/>
</dbReference>
<dbReference type="Pfam" id="PF01728">
    <property type="entry name" value="FtsJ"/>
    <property type="match status" value="1"/>
</dbReference>
<dbReference type="Pfam" id="PF18125">
    <property type="entry name" value="RlmM_FDX"/>
    <property type="match status" value="1"/>
</dbReference>
<dbReference type="PIRSF" id="PIRSF028774">
    <property type="entry name" value="UCP028774"/>
    <property type="match status" value="1"/>
</dbReference>
<dbReference type="SUPFAM" id="SSF53335">
    <property type="entry name" value="S-adenosyl-L-methionine-dependent methyltransferases"/>
    <property type="match status" value="1"/>
</dbReference>
<gene>
    <name evidence="1" type="primary">rlmM</name>
    <name type="ordered locus">Sde_1153</name>
</gene>
<name>RLMM_SACD2</name>
<accession>Q21LL4</accession>
<sequence length="349" mass="39047">MILICLCRQGFEKEVAAEITDCAAYAGIAGYVKTNADTGYVEFVLPDLDSATALFEAIRFDDLVFVRHWFVTPAIASDLPKEDRASPLMASAQALPPLAKLEPITLDTNDGKALVALTRGVTNHMRTVFKKAGAFNAKSDWVGQVLFFSGEQACIGYFPQSNGSLWVGGIPRLRAPKDAPSRATLKLEEAWHQFIPREQWDQRIAPSMRAVDLGAAPGGWTWQLVNKSMFVEAVDNGPMAENIMASGQVTHRMEDAFRFAPERAVHWLVSDIADKPARVAELITRWAENKWFKEAVFNLKLPMKKRYIELQLCSEIITLALDNAGIEYTLKFKQLYHDREEVTGHLVLF</sequence>
<proteinExistence type="inferred from homology"/>
<reference key="1">
    <citation type="journal article" date="2008" name="PLoS Genet.">
        <title>Complete genome sequence of the complex carbohydrate-degrading marine bacterium, Saccharophagus degradans strain 2-40 T.</title>
        <authorList>
            <person name="Weiner R.M."/>
            <person name="Taylor L.E. II"/>
            <person name="Henrissat B."/>
            <person name="Hauser L."/>
            <person name="Land M."/>
            <person name="Coutinho P.M."/>
            <person name="Rancurel C."/>
            <person name="Saunders E.H."/>
            <person name="Longmire A.G."/>
            <person name="Zhang H."/>
            <person name="Bayer E.A."/>
            <person name="Gilbert H.J."/>
            <person name="Larimer F."/>
            <person name="Zhulin I.B."/>
            <person name="Ekborg N.A."/>
            <person name="Lamed R."/>
            <person name="Richardson P.M."/>
            <person name="Borovok I."/>
            <person name="Hutcheson S."/>
        </authorList>
    </citation>
    <scope>NUCLEOTIDE SEQUENCE [LARGE SCALE GENOMIC DNA]</scope>
    <source>
        <strain>2-40 / ATCC 43961 / DSM 17024</strain>
    </source>
</reference>
<evidence type="ECO:0000255" key="1">
    <source>
        <dbReference type="HAMAP-Rule" id="MF_01551"/>
    </source>
</evidence>